<proteinExistence type="inferred from homology"/>
<feature type="chain" id="PRO_0000155799" description="Quinolinate synthase">
    <location>
        <begin position="1"/>
        <end position="339"/>
    </location>
</feature>
<feature type="binding site" evidence="1">
    <location>
        <position position="63"/>
    </location>
    <ligand>
        <name>iminosuccinate</name>
        <dbReference type="ChEBI" id="CHEBI:77875"/>
    </ligand>
</feature>
<feature type="binding site" evidence="1">
    <location>
        <position position="81"/>
    </location>
    <ligand>
        <name>iminosuccinate</name>
        <dbReference type="ChEBI" id="CHEBI:77875"/>
    </ligand>
</feature>
<feature type="binding site" evidence="1">
    <location>
        <position position="126"/>
    </location>
    <ligand>
        <name>[4Fe-4S] cluster</name>
        <dbReference type="ChEBI" id="CHEBI:49883"/>
    </ligand>
</feature>
<feature type="binding site" evidence="1">
    <location>
        <begin position="152"/>
        <end position="154"/>
    </location>
    <ligand>
        <name>iminosuccinate</name>
        <dbReference type="ChEBI" id="CHEBI:77875"/>
    </ligand>
</feature>
<feature type="binding site" evidence="1">
    <location>
        <position position="169"/>
    </location>
    <ligand>
        <name>iminosuccinate</name>
        <dbReference type="ChEBI" id="CHEBI:77875"/>
    </ligand>
</feature>
<feature type="binding site" evidence="1">
    <location>
        <position position="211"/>
    </location>
    <ligand>
        <name>[4Fe-4S] cluster</name>
        <dbReference type="ChEBI" id="CHEBI:49883"/>
    </ligand>
</feature>
<feature type="binding site" evidence="1">
    <location>
        <begin position="237"/>
        <end position="239"/>
    </location>
    <ligand>
        <name>iminosuccinate</name>
        <dbReference type="ChEBI" id="CHEBI:77875"/>
    </ligand>
</feature>
<feature type="binding site" evidence="1">
    <location>
        <position position="254"/>
    </location>
    <ligand>
        <name>iminosuccinate</name>
        <dbReference type="ChEBI" id="CHEBI:77875"/>
    </ligand>
</feature>
<feature type="binding site" evidence="1">
    <location>
        <position position="297"/>
    </location>
    <ligand>
        <name>[4Fe-4S] cluster</name>
        <dbReference type="ChEBI" id="CHEBI:49883"/>
    </ligand>
</feature>
<dbReference type="EC" id="2.5.1.72" evidence="1"/>
<dbReference type="EMBL" id="AE003849">
    <property type="protein sequence ID" value="AAF84729.1"/>
    <property type="status" value="ALT_INIT"/>
    <property type="molecule type" value="Genomic_DNA"/>
</dbReference>
<dbReference type="PIR" id="H82620">
    <property type="entry name" value="H82620"/>
</dbReference>
<dbReference type="SMR" id="Q9PC58"/>
<dbReference type="STRING" id="160492.XF_1923"/>
<dbReference type="KEGG" id="xfa:XF_1923"/>
<dbReference type="eggNOG" id="COG0379">
    <property type="taxonomic scope" value="Bacteria"/>
</dbReference>
<dbReference type="HOGENOM" id="CLU_047382_0_0_6"/>
<dbReference type="UniPathway" id="UPA00253">
    <property type="reaction ID" value="UER00327"/>
</dbReference>
<dbReference type="Proteomes" id="UP000000812">
    <property type="component" value="Chromosome"/>
</dbReference>
<dbReference type="GO" id="GO:0005829">
    <property type="term" value="C:cytosol"/>
    <property type="evidence" value="ECO:0007669"/>
    <property type="project" value="TreeGrafter"/>
</dbReference>
<dbReference type="GO" id="GO:0051539">
    <property type="term" value="F:4 iron, 4 sulfur cluster binding"/>
    <property type="evidence" value="ECO:0007669"/>
    <property type="project" value="UniProtKB-KW"/>
</dbReference>
<dbReference type="GO" id="GO:0046872">
    <property type="term" value="F:metal ion binding"/>
    <property type="evidence" value="ECO:0007669"/>
    <property type="project" value="UniProtKB-KW"/>
</dbReference>
<dbReference type="GO" id="GO:0008987">
    <property type="term" value="F:quinolinate synthetase A activity"/>
    <property type="evidence" value="ECO:0007669"/>
    <property type="project" value="UniProtKB-UniRule"/>
</dbReference>
<dbReference type="GO" id="GO:0034628">
    <property type="term" value="P:'de novo' NAD biosynthetic process from L-aspartate"/>
    <property type="evidence" value="ECO:0007669"/>
    <property type="project" value="TreeGrafter"/>
</dbReference>
<dbReference type="Gene3D" id="3.40.50.10800">
    <property type="entry name" value="NadA-like"/>
    <property type="match status" value="3"/>
</dbReference>
<dbReference type="HAMAP" id="MF_00568">
    <property type="entry name" value="NadA_type2"/>
    <property type="match status" value="1"/>
</dbReference>
<dbReference type="InterPro" id="IPR003473">
    <property type="entry name" value="NadA"/>
</dbReference>
<dbReference type="InterPro" id="IPR036094">
    <property type="entry name" value="NadA_sf"/>
</dbReference>
<dbReference type="InterPro" id="IPR023066">
    <property type="entry name" value="Quinolinate_synth_type2"/>
</dbReference>
<dbReference type="NCBIfam" id="TIGR00550">
    <property type="entry name" value="nadA"/>
    <property type="match status" value="1"/>
</dbReference>
<dbReference type="NCBIfam" id="NF006878">
    <property type="entry name" value="PRK09375.1-2"/>
    <property type="match status" value="1"/>
</dbReference>
<dbReference type="NCBIfam" id="NF006879">
    <property type="entry name" value="PRK09375.1-4"/>
    <property type="match status" value="1"/>
</dbReference>
<dbReference type="PANTHER" id="PTHR30573:SF0">
    <property type="entry name" value="QUINOLINATE SYNTHASE, CHLOROPLASTIC"/>
    <property type="match status" value="1"/>
</dbReference>
<dbReference type="PANTHER" id="PTHR30573">
    <property type="entry name" value="QUINOLINATE SYNTHETASE A"/>
    <property type="match status" value="1"/>
</dbReference>
<dbReference type="Pfam" id="PF02445">
    <property type="entry name" value="NadA"/>
    <property type="match status" value="1"/>
</dbReference>
<dbReference type="SUPFAM" id="SSF142754">
    <property type="entry name" value="NadA-like"/>
    <property type="match status" value="1"/>
</dbReference>
<keyword id="KW-0004">4Fe-4S</keyword>
<keyword id="KW-0963">Cytoplasm</keyword>
<keyword id="KW-0408">Iron</keyword>
<keyword id="KW-0411">Iron-sulfur</keyword>
<keyword id="KW-0479">Metal-binding</keyword>
<keyword id="KW-0662">Pyridine nucleotide biosynthesis</keyword>
<keyword id="KW-0808">Transferase</keyword>
<name>NADA_XYLFA</name>
<sequence>MEEAHNMREIRLREIVVNHAVLSSCLDKCGDCFASEAARIKFDNDIEAIFELKRKRNAVILAHNYQTPEIFHGVADIVGDSLALARKAIDVDADVIVLAGVHFMAETAKLLNPEKTVLIPDMEAGCSLAESITPEDVALLRQTYPGIPIVTYVNTSAAVKAASDICCTSGNAKKVVEALGVPKVLMIPDEYLARNVAKETEVQIISWHGHCEVHELFSASDILQLRENHPGVTVLAHPECPPDVVAAADFAGSTAAMSDYVTTKQPKRVVLLTECSMSDNIAVHHPDVEFISSCNLCPHMKRITLANIRTALEENRHEVTVDAKIAAPARRAVERMLAI</sequence>
<reference key="1">
    <citation type="journal article" date="2000" name="Nature">
        <title>The genome sequence of the plant pathogen Xylella fastidiosa.</title>
        <authorList>
            <person name="Simpson A.J.G."/>
            <person name="Reinach F.C."/>
            <person name="Arruda P."/>
            <person name="Abreu F.A."/>
            <person name="Acencio M."/>
            <person name="Alvarenga R."/>
            <person name="Alves L.M.C."/>
            <person name="Araya J.E."/>
            <person name="Baia G.S."/>
            <person name="Baptista C.S."/>
            <person name="Barros M.H."/>
            <person name="Bonaccorsi E.D."/>
            <person name="Bordin S."/>
            <person name="Bove J.M."/>
            <person name="Briones M.R.S."/>
            <person name="Bueno M.R.P."/>
            <person name="Camargo A.A."/>
            <person name="Camargo L.E.A."/>
            <person name="Carraro D.M."/>
            <person name="Carrer H."/>
            <person name="Colauto N.B."/>
            <person name="Colombo C."/>
            <person name="Costa F.F."/>
            <person name="Costa M.C.R."/>
            <person name="Costa-Neto C.M."/>
            <person name="Coutinho L.L."/>
            <person name="Cristofani M."/>
            <person name="Dias-Neto E."/>
            <person name="Docena C."/>
            <person name="El-Dorry H."/>
            <person name="Facincani A.P."/>
            <person name="Ferreira A.J.S."/>
            <person name="Ferreira V.C.A."/>
            <person name="Ferro J.A."/>
            <person name="Fraga J.S."/>
            <person name="Franca S.C."/>
            <person name="Franco M.C."/>
            <person name="Frohme M."/>
            <person name="Furlan L.R."/>
            <person name="Garnier M."/>
            <person name="Goldman G.H."/>
            <person name="Goldman M.H.S."/>
            <person name="Gomes S.L."/>
            <person name="Gruber A."/>
            <person name="Ho P.L."/>
            <person name="Hoheisel J.D."/>
            <person name="Junqueira M.L."/>
            <person name="Kemper E.L."/>
            <person name="Kitajima J.P."/>
            <person name="Krieger J.E."/>
            <person name="Kuramae E.E."/>
            <person name="Laigret F."/>
            <person name="Lambais M.R."/>
            <person name="Leite L.C.C."/>
            <person name="Lemos E.G.M."/>
            <person name="Lemos M.V.F."/>
            <person name="Lopes S.A."/>
            <person name="Lopes C.R."/>
            <person name="Machado J.A."/>
            <person name="Machado M.A."/>
            <person name="Madeira A.M.B.N."/>
            <person name="Madeira H.M.F."/>
            <person name="Marino C.L."/>
            <person name="Marques M.V."/>
            <person name="Martins E.A.L."/>
            <person name="Martins E.M.F."/>
            <person name="Matsukuma A.Y."/>
            <person name="Menck C.F.M."/>
            <person name="Miracca E.C."/>
            <person name="Miyaki C.Y."/>
            <person name="Monteiro-Vitorello C.B."/>
            <person name="Moon D.H."/>
            <person name="Nagai M.A."/>
            <person name="Nascimento A.L.T.O."/>
            <person name="Netto L.E.S."/>
            <person name="Nhani A. Jr."/>
            <person name="Nobrega F.G."/>
            <person name="Nunes L.R."/>
            <person name="Oliveira M.A."/>
            <person name="de Oliveira M.C."/>
            <person name="de Oliveira R.C."/>
            <person name="Palmieri D.A."/>
            <person name="Paris A."/>
            <person name="Peixoto B.R."/>
            <person name="Pereira G.A.G."/>
            <person name="Pereira H.A. Jr."/>
            <person name="Pesquero J.B."/>
            <person name="Quaggio R.B."/>
            <person name="Roberto P.G."/>
            <person name="Rodrigues V."/>
            <person name="de Rosa A.J.M."/>
            <person name="de Rosa V.E. Jr."/>
            <person name="de Sa R.G."/>
            <person name="Santelli R.V."/>
            <person name="Sawasaki H.E."/>
            <person name="da Silva A.C.R."/>
            <person name="da Silva A.M."/>
            <person name="da Silva F.R."/>
            <person name="Silva W.A. Jr."/>
            <person name="da Silveira J.F."/>
            <person name="Silvestri M.L.Z."/>
            <person name="Siqueira W.J."/>
            <person name="de Souza A.A."/>
            <person name="de Souza A.P."/>
            <person name="Terenzi M.F."/>
            <person name="Truffi D."/>
            <person name="Tsai S.M."/>
            <person name="Tsuhako M.H."/>
            <person name="Vallada H."/>
            <person name="Van Sluys M.A."/>
            <person name="Verjovski-Almeida S."/>
            <person name="Vettore A.L."/>
            <person name="Zago M.A."/>
            <person name="Zatz M."/>
            <person name="Meidanis J."/>
            <person name="Setubal J.C."/>
        </authorList>
    </citation>
    <scope>NUCLEOTIDE SEQUENCE [LARGE SCALE GENOMIC DNA]</scope>
    <source>
        <strain>9a5c</strain>
    </source>
</reference>
<organism>
    <name type="scientific">Xylella fastidiosa (strain 9a5c)</name>
    <dbReference type="NCBI Taxonomy" id="160492"/>
    <lineage>
        <taxon>Bacteria</taxon>
        <taxon>Pseudomonadati</taxon>
        <taxon>Pseudomonadota</taxon>
        <taxon>Gammaproteobacteria</taxon>
        <taxon>Lysobacterales</taxon>
        <taxon>Lysobacteraceae</taxon>
        <taxon>Xylella</taxon>
    </lineage>
</organism>
<protein>
    <recommendedName>
        <fullName evidence="1">Quinolinate synthase</fullName>
        <ecNumber evidence="1">2.5.1.72</ecNumber>
    </recommendedName>
</protein>
<comment type="function">
    <text evidence="1">Catalyzes the condensation of iminoaspartate with dihydroxyacetone phosphate to form quinolinate.</text>
</comment>
<comment type="catalytic activity">
    <reaction evidence="1">
        <text>iminosuccinate + dihydroxyacetone phosphate = quinolinate + phosphate + 2 H2O + H(+)</text>
        <dbReference type="Rhea" id="RHEA:25888"/>
        <dbReference type="ChEBI" id="CHEBI:15377"/>
        <dbReference type="ChEBI" id="CHEBI:15378"/>
        <dbReference type="ChEBI" id="CHEBI:29959"/>
        <dbReference type="ChEBI" id="CHEBI:43474"/>
        <dbReference type="ChEBI" id="CHEBI:57642"/>
        <dbReference type="ChEBI" id="CHEBI:77875"/>
        <dbReference type="EC" id="2.5.1.72"/>
    </reaction>
    <physiologicalReaction direction="left-to-right" evidence="1">
        <dbReference type="Rhea" id="RHEA:25889"/>
    </physiologicalReaction>
</comment>
<comment type="cofactor">
    <cofactor evidence="1">
        <name>[4Fe-4S] cluster</name>
        <dbReference type="ChEBI" id="CHEBI:49883"/>
    </cofactor>
    <text evidence="1">Binds 1 [4Fe-4S] cluster per subunit.</text>
</comment>
<comment type="pathway">
    <text evidence="1">Cofactor biosynthesis; NAD(+) biosynthesis; quinolinate from iminoaspartate: step 1/1.</text>
</comment>
<comment type="subcellular location">
    <subcellularLocation>
        <location evidence="1">Cytoplasm</location>
    </subcellularLocation>
</comment>
<comment type="similarity">
    <text evidence="1">Belongs to the quinolinate synthase family. Type 2 subfamily.</text>
</comment>
<comment type="sequence caution" evidence="2">
    <conflict type="erroneous initiation">
        <sequence resource="EMBL-CDS" id="AAF84729"/>
    </conflict>
</comment>
<gene>
    <name evidence="1" type="primary">nadA</name>
    <name type="ordered locus">XF_1923</name>
</gene>
<evidence type="ECO:0000255" key="1">
    <source>
        <dbReference type="HAMAP-Rule" id="MF_00568"/>
    </source>
</evidence>
<evidence type="ECO:0000305" key="2"/>
<accession>Q9PC58</accession>